<protein>
    <recommendedName>
        <fullName evidence="1">Aspartate--tRNA(Asp/Asn) ligase</fullName>
        <ecNumber evidence="1">6.1.1.23</ecNumber>
    </recommendedName>
    <alternativeName>
        <fullName evidence="1">Aspartyl-tRNA synthetase</fullName>
        <shortName evidence="1">AspRS</shortName>
    </alternativeName>
    <alternativeName>
        <fullName evidence="1">Non-discriminating aspartyl-tRNA synthetase</fullName>
        <shortName evidence="1">ND-AspRS</shortName>
    </alternativeName>
</protein>
<dbReference type="EC" id="6.1.1.23" evidence="1"/>
<dbReference type="EMBL" id="CP000283">
    <property type="protein sequence ID" value="ABE40174.1"/>
    <property type="molecule type" value="Genomic_DNA"/>
</dbReference>
<dbReference type="SMR" id="Q135R5"/>
<dbReference type="STRING" id="316057.RPD_2947"/>
<dbReference type="KEGG" id="rpd:RPD_2947"/>
<dbReference type="eggNOG" id="COG0173">
    <property type="taxonomic scope" value="Bacteria"/>
</dbReference>
<dbReference type="HOGENOM" id="CLU_014330_3_2_5"/>
<dbReference type="BioCyc" id="RPAL316057:RPD_RS14810-MONOMER"/>
<dbReference type="Proteomes" id="UP000001818">
    <property type="component" value="Chromosome"/>
</dbReference>
<dbReference type="GO" id="GO:0005737">
    <property type="term" value="C:cytoplasm"/>
    <property type="evidence" value="ECO:0007669"/>
    <property type="project" value="UniProtKB-SubCell"/>
</dbReference>
<dbReference type="GO" id="GO:0004815">
    <property type="term" value="F:aspartate-tRNA ligase activity"/>
    <property type="evidence" value="ECO:0007669"/>
    <property type="project" value="UniProtKB-UniRule"/>
</dbReference>
<dbReference type="GO" id="GO:0050560">
    <property type="term" value="F:aspartate-tRNA(Asn) ligase activity"/>
    <property type="evidence" value="ECO:0007669"/>
    <property type="project" value="UniProtKB-EC"/>
</dbReference>
<dbReference type="GO" id="GO:0005524">
    <property type="term" value="F:ATP binding"/>
    <property type="evidence" value="ECO:0007669"/>
    <property type="project" value="UniProtKB-UniRule"/>
</dbReference>
<dbReference type="GO" id="GO:0003676">
    <property type="term" value="F:nucleic acid binding"/>
    <property type="evidence" value="ECO:0007669"/>
    <property type="project" value="InterPro"/>
</dbReference>
<dbReference type="GO" id="GO:0006422">
    <property type="term" value="P:aspartyl-tRNA aminoacylation"/>
    <property type="evidence" value="ECO:0007669"/>
    <property type="project" value="UniProtKB-UniRule"/>
</dbReference>
<dbReference type="CDD" id="cd00777">
    <property type="entry name" value="AspRS_core"/>
    <property type="match status" value="1"/>
</dbReference>
<dbReference type="CDD" id="cd04317">
    <property type="entry name" value="EcAspRS_like_N"/>
    <property type="match status" value="1"/>
</dbReference>
<dbReference type="Gene3D" id="3.30.930.10">
    <property type="entry name" value="Bira Bifunctional Protein, Domain 2"/>
    <property type="match status" value="1"/>
</dbReference>
<dbReference type="Gene3D" id="3.30.1360.30">
    <property type="entry name" value="GAD-like domain"/>
    <property type="match status" value="1"/>
</dbReference>
<dbReference type="Gene3D" id="2.40.50.140">
    <property type="entry name" value="Nucleic acid-binding proteins"/>
    <property type="match status" value="1"/>
</dbReference>
<dbReference type="HAMAP" id="MF_00044">
    <property type="entry name" value="Asp_tRNA_synth_type1"/>
    <property type="match status" value="1"/>
</dbReference>
<dbReference type="InterPro" id="IPR004364">
    <property type="entry name" value="Aa-tRNA-synt_II"/>
</dbReference>
<dbReference type="InterPro" id="IPR006195">
    <property type="entry name" value="aa-tRNA-synth_II"/>
</dbReference>
<dbReference type="InterPro" id="IPR045864">
    <property type="entry name" value="aa-tRNA-synth_II/BPL/LPL"/>
</dbReference>
<dbReference type="InterPro" id="IPR004524">
    <property type="entry name" value="Asp-tRNA-ligase_1"/>
</dbReference>
<dbReference type="InterPro" id="IPR047089">
    <property type="entry name" value="Asp-tRNA-ligase_1_N"/>
</dbReference>
<dbReference type="InterPro" id="IPR002312">
    <property type="entry name" value="Asp/Asn-tRNA-synth_IIb"/>
</dbReference>
<dbReference type="InterPro" id="IPR047090">
    <property type="entry name" value="AspRS_core"/>
</dbReference>
<dbReference type="InterPro" id="IPR004115">
    <property type="entry name" value="GAD-like_sf"/>
</dbReference>
<dbReference type="InterPro" id="IPR029351">
    <property type="entry name" value="GAD_dom"/>
</dbReference>
<dbReference type="InterPro" id="IPR012340">
    <property type="entry name" value="NA-bd_OB-fold"/>
</dbReference>
<dbReference type="InterPro" id="IPR004365">
    <property type="entry name" value="NA-bd_OB_tRNA"/>
</dbReference>
<dbReference type="NCBIfam" id="TIGR00459">
    <property type="entry name" value="aspS_bact"/>
    <property type="match status" value="1"/>
</dbReference>
<dbReference type="NCBIfam" id="NF001750">
    <property type="entry name" value="PRK00476.1"/>
    <property type="match status" value="1"/>
</dbReference>
<dbReference type="PANTHER" id="PTHR22594:SF5">
    <property type="entry name" value="ASPARTATE--TRNA LIGASE, MITOCHONDRIAL"/>
    <property type="match status" value="1"/>
</dbReference>
<dbReference type="PANTHER" id="PTHR22594">
    <property type="entry name" value="ASPARTYL/LYSYL-TRNA SYNTHETASE"/>
    <property type="match status" value="1"/>
</dbReference>
<dbReference type="Pfam" id="PF02938">
    <property type="entry name" value="GAD"/>
    <property type="match status" value="1"/>
</dbReference>
<dbReference type="Pfam" id="PF00152">
    <property type="entry name" value="tRNA-synt_2"/>
    <property type="match status" value="1"/>
</dbReference>
<dbReference type="Pfam" id="PF01336">
    <property type="entry name" value="tRNA_anti-codon"/>
    <property type="match status" value="1"/>
</dbReference>
<dbReference type="PRINTS" id="PR01042">
    <property type="entry name" value="TRNASYNTHASP"/>
</dbReference>
<dbReference type="SUPFAM" id="SSF55681">
    <property type="entry name" value="Class II aaRS and biotin synthetases"/>
    <property type="match status" value="1"/>
</dbReference>
<dbReference type="SUPFAM" id="SSF55261">
    <property type="entry name" value="GAD domain-like"/>
    <property type="match status" value="1"/>
</dbReference>
<dbReference type="SUPFAM" id="SSF50249">
    <property type="entry name" value="Nucleic acid-binding proteins"/>
    <property type="match status" value="1"/>
</dbReference>
<dbReference type="PROSITE" id="PS50862">
    <property type="entry name" value="AA_TRNA_LIGASE_II"/>
    <property type="match status" value="1"/>
</dbReference>
<organism>
    <name type="scientific">Rhodopseudomonas palustris (strain BisB5)</name>
    <dbReference type="NCBI Taxonomy" id="316057"/>
    <lineage>
        <taxon>Bacteria</taxon>
        <taxon>Pseudomonadati</taxon>
        <taxon>Pseudomonadota</taxon>
        <taxon>Alphaproteobacteria</taxon>
        <taxon>Hyphomicrobiales</taxon>
        <taxon>Nitrobacteraceae</taxon>
        <taxon>Rhodopseudomonas</taxon>
    </lineage>
</organism>
<reference key="1">
    <citation type="submission" date="2006-03" db="EMBL/GenBank/DDBJ databases">
        <title>Complete sequence of Rhodopseudomonas palustris BisB5.</title>
        <authorList>
            <consortium name="US DOE Joint Genome Institute"/>
            <person name="Copeland A."/>
            <person name="Lucas S."/>
            <person name="Lapidus A."/>
            <person name="Barry K."/>
            <person name="Detter J.C."/>
            <person name="Glavina del Rio T."/>
            <person name="Hammon N."/>
            <person name="Israni S."/>
            <person name="Dalin E."/>
            <person name="Tice H."/>
            <person name="Pitluck S."/>
            <person name="Chain P."/>
            <person name="Malfatti S."/>
            <person name="Shin M."/>
            <person name="Vergez L."/>
            <person name="Schmutz J."/>
            <person name="Larimer F."/>
            <person name="Land M."/>
            <person name="Hauser L."/>
            <person name="Pelletier D.A."/>
            <person name="Kyrpides N."/>
            <person name="Lykidis A."/>
            <person name="Oda Y."/>
            <person name="Harwood C.S."/>
            <person name="Richardson P."/>
        </authorList>
    </citation>
    <scope>NUCLEOTIDE SEQUENCE [LARGE SCALE GENOMIC DNA]</scope>
    <source>
        <strain>BisB5</strain>
    </source>
</reference>
<evidence type="ECO:0000255" key="1">
    <source>
        <dbReference type="HAMAP-Rule" id="MF_00044"/>
    </source>
</evidence>
<keyword id="KW-0030">Aminoacyl-tRNA synthetase</keyword>
<keyword id="KW-0067">ATP-binding</keyword>
<keyword id="KW-0963">Cytoplasm</keyword>
<keyword id="KW-0436">Ligase</keyword>
<keyword id="KW-0547">Nucleotide-binding</keyword>
<keyword id="KW-0648">Protein biosynthesis</keyword>
<gene>
    <name evidence="1" type="primary">aspS</name>
    <name type="ordered locus">RPD_2947</name>
</gene>
<accession>Q135R5</accession>
<proteinExistence type="inferred from homology"/>
<feature type="chain" id="PRO_1000006741" description="Aspartate--tRNA(Asp/Asn) ligase">
    <location>
        <begin position="1"/>
        <end position="590"/>
    </location>
</feature>
<feature type="region of interest" description="Aspartate" evidence="1">
    <location>
        <begin position="199"/>
        <end position="202"/>
    </location>
</feature>
<feature type="binding site" evidence="1">
    <location>
        <position position="175"/>
    </location>
    <ligand>
        <name>L-aspartate</name>
        <dbReference type="ChEBI" id="CHEBI:29991"/>
    </ligand>
</feature>
<feature type="binding site" evidence="1">
    <location>
        <begin position="221"/>
        <end position="223"/>
    </location>
    <ligand>
        <name>ATP</name>
        <dbReference type="ChEBI" id="CHEBI:30616"/>
    </ligand>
</feature>
<feature type="binding site" evidence="1">
    <location>
        <position position="221"/>
    </location>
    <ligand>
        <name>L-aspartate</name>
        <dbReference type="ChEBI" id="CHEBI:29991"/>
    </ligand>
</feature>
<feature type="binding site" evidence="1">
    <location>
        <position position="450"/>
    </location>
    <ligand>
        <name>L-aspartate</name>
        <dbReference type="ChEBI" id="CHEBI:29991"/>
    </ligand>
</feature>
<feature type="binding site" evidence="1">
    <location>
        <position position="484"/>
    </location>
    <ligand>
        <name>ATP</name>
        <dbReference type="ChEBI" id="CHEBI:30616"/>
    </ligand>
</feature>
<feature type="binding site" evidence="1">
    <location>
        <position position="491"/>
    </location>
    <ligand>
        <name>L-aspartate</name>
        <dbReference type="ChEBI" id="CHEBI:29991"/>
    </ligand>
</feature>
<feature type="binding site" evidence="1">
    <location>
        <begin position="536"/>
        <end position="539"/>
    </location>
    <ligand>
        <name>ATP</name>
        <dbReference type="ChEBI" id="CHEBI:30616"/>
    </ligand>
</feature>
<feature type="site" description="Important for tRNA non-discrimination" evidence="1">
    <location>
        <position position="33"/>
    </location>
</feature>
<feature type="site" description="Important for tRNA non-discrimination" evidence="1">
    <location>
        <position position="83"/>
    </location>
</feature>
<sequence>MHRYRTHTCGALRDSDIDQTVRLSGWCHRIRDHGGLLFIDLRDHYGLTQCVADPDSPAFKDAEKLRAEWVVRIDGRVRRRPEGTDNDDLPTGKIELFITEIEVLGPAGELPLPVFGEQEYPEDVRLRYRFLDLRREKLHQNIMTRGAIVDAMRARMKQQGFFEFQTPILTASSPEGARDFLVPSRIHPGKFYALPQAPQQYKQLLMMSGFDRYFQIAPCFRDEDPRADRLPGEFYQLDVEMSFVTQDDVFAAMEPVITGVFEDFAKGKRVTKGWPRIPYADSMRKYGTDKPDLRNPIEMQDVSEHFRGSGFKVFARMLEEERNQVWAIPGPGGGSRAFCDRMNSWAQGEGQPGLGYIMWREGGEGAGPLANNIGPERTEAIRAALGLKAGDAAFFVAGDPSKFVKFAGLARTKVGEELNLIDKDQFALAWVVDFPMYEYNEDDKKVDFSHNPFSMPQGGMDALLGQDPLTIKAFQYDITCNGFEIASGGIRNHRPEAMVKAFEIAGYGEQEVVDRFGGMYRAFQYGAPPHGGMAAGVDRIVMLLCGTNNLREISLFPMNQRAEDLLMGAPSQVTPKQLRELHIRLNLPEN</sequence>
<name>SYDND_RHOPS</name>
<comment type="function">
    <text evidence="1">Aspartyl-tRNA synthetase with relaxed tRNA specificity since it is able to aspartylate not only its cognate tRNA(Asp) but also tRNA(Asn). Reaction proceeds in two steps: L-aspartate is first activated by ATP to form Asp-AMP and then transferred to the acceptor end of tRNA(Asp/Asn).</text>
</comment>
<comment type="catalytic activity">
    <reaction evidence="1">
        <text>tRNA(Asx) + L-aspartate + ATP = L-aspartyl-tRNA(Asx) + AMP + diphosphate</text>
        <dbReference type="Rhea" id="RHEA:18349"/>
        <dbReference type="Rhea" id="RHEA-COMP:9710"/>
        <dbReference type="Rhea" id="RHEA-COMP:9711"/>
        <dbReference type="ChEBI" id="CHEBI:29991"/>
        <dbReference type="ChEBI" id="CHEBI:30616"/>
        <dbReference type="ChEBI" id="CHEBI:33019"/>
        <dbReference type="ChEBI" id="CHEBI:78442"/>
        <dbReference type="ChEBI" id="CHEBI:78516"/>
        <dbReference type="ChEBI" id="CHEBI:456215"/>
        <dbReference type="EC" id="6.1.1.23"/>
    </reaction>
</comment>
<comment type="subunit">
    <text evidence="1">Homodimer.</text>
</comment>
<comment type="subcellular location">
    <subcellularLocation>
        <location evidence="1">Cytoplasm</location>
    </subcellularLocation>
</comment>
<comment type="similarity">
    <text evidence="1">Belongs to the class-II aminoacyl-tRNA synthetase family. Type 1 subfamily.</text>
</comment>